<accession>Q1MIM6</accession>
<protein>
    <recommendedName>
        <fullName evidence="1">ATP-dependent Clp protease ATP-binding subunit ClpX</fullName>
    </recommendedName>
</protein>
<organism>
    <name type="scientific">Rhizobium johnstonii (strain DSM 114642 / LMG 32736 / 3841)</name>
    <name type="common">Rhizobium leguminosarum bv. viciae</name>
    <dbReference type="NCBI Taxonomy" id="216596"/>
    <lineage>
        <taxon>Bacteria</taxon>
        <taxon>Pseudomonadati</taxon>
        <taxon>Pseudomonadota</taxon>
        <taxon>Alphaproteobacteria</taxon>
        <taxon>Hyphomicrobiales</taxon>
        <taxon>Rhizobiaceae</taxon>
        <taxon>Rhizobium/Agrobacterium group</taxon>
        <taxon>Rhizobium</taxon>
        <taxon>Rhizobium johnstonii</taxon>
    </lineage>
</organism>
<evidence type="ECO:0000255" key="1">
    <source>
        <dbReference type="HAMAP-Rule" id="MF_00175"/>
    </source>
</evidence>
<evidence type="ECO:0000255" key="2">
    <source>
        <dbReference type="PROSITE-ProRule" id="PRU01250"/>
    </source>
</evidence>
<dbReference type="EMBL" id="AM236080">
    <property type="protein sequence ID" value="CAK07184.1"/>
    <property type="molecule type" value="Genomic_DNA"/>
</dbReference>
<dbReference type="RefSeq" id="WP_003547337.1">
    <property type="nucleotide sequence ID" value="NC_008380.1"/>
</dbReference>
<dbReference type="SMR" id="Q1MIM6"/>
<dbReference type="EnsemblBacteria" id="CAK07184">
    <property type="protein sequence ID" value="CAK07184"/>
    <property type="gene ID" value="RL1689"/>
</dbReference>
<dbReference type="GeneID" id="84669390"/>
<dbReference type="KEGG" id="rle:RL1689"/>
<dbReference type="eggNOG" id="COG1219">
    <property type="taxonomic scope" value="Bacteria"/>
</dbReference>
<dbReference type="HOGENOM" id="CLU_014218_8_2_5"/>
<dbReference type="Proteomes" id="UP000006575">
    <property type="component" value="Chromosome"/>
</dbReference>
<dbReference type="GO" id="GO:0009376">
    <property type="term" value="C:HslUV protease complex"/>
    <property type="evidence" value="ECO:0007669"/>
    <property type="project" value="TreeGrafter"/>
</dbReference>
<dbReference type="GO" id="GO:0005524">
    <property type="term" value="F:ATP binding"/>
    <property type="evidence" value="ECO:0007669"/>
    <property type="project" value="UniProtKB-UniRule"/>
</dbReference>
<dbReference type="GO" id="GO:0016887">
    <property type="term" value="F:ATP hydrolysis activity"/>
    <property type="evidence" value="ECO:0007669"/>
    <property type="project" value="InterPro"/>
</dbReference>
<dbReference type="GO" id="GO:0140662">
    <property type="term" value="F:ATP-dependent protein folding chaperone"/>
    <property type="evidence" value="ECO:0007669"/>
    <property type="project" value="InterPro"/>
</dbReference>
<dbReference type="GO" id="GO:0046983">
    <property type="term" value="F:protein dimerization activity"/>
    <property type="evidence" value="ECO:0007669"/>
    <property type="project" value="InterPro"/>
</dbReference>
<dbReference type="GO" id="GO:0051082">
    <property type="term" value="F:unfolded protein binding"/>
    <property type="evidence" value="ECO:0007669"/>
    <property type="project" value="UniProtKB-UniRule"/>
</dbReference>
<dbReference type="GO" id="GO:0008270">
    <property type="term" value="F:zinc ion binding"/>
    <property type="evidence" value="ECO:0007669"/>
    <property type="project" value="InterPro"/>
</dbReference>
<dbReference type="GO" id="GO:0051301">
    <property type="term" value="P:cell division"/>
    <property type="evidence" value="ECO:0007669"/>
    <property type="project" value="TreeGrafter"/>
</dbReference>
<dbReference type="GO" id="GO:0051603">
    <property type="term" value="P:proteolysis involved in protein catabolic process"/>
    <property type="evidence" value="ECO:0007669"/>
    <property type="project" value="TreeGrafter"/>
</dbReference>
<dbReference type="CDD" id="cd19497">
    <property type="entry name" value="RecA-like_ClpX"/>
    <property type="match status" value="1"/>
</dbReference>
<dbReference type="FunFam" id="1.10.8.60:FF:000002">
    <property type="entry name" value="ATP-dependent Clp protease ATP-binding subunit ClpX"/>
    <property type="match status" value="1"/>
</dbReference>
<dbReference type="FunFam" id="3.40.50.300:FF:000005">
    <property type="entry name" value="ATP-dependent Clp protease ATP-binding subunit ClpX"/>
    <property type="match status" value="1"/>
</dbReference>
<dbReference type="Gene3D" id="1.10.8.60">
    <property type="match status" value="1"/>
</dbReference>
<dbReference type="Gene3D" id="6.20.220.10">
    <property type="entry name" value="ClpX chaperone, C4-type zinc finger domain"/>
    <property type="match status" value="1"/>
</dbReference>
<dbReference type="Gene3D" id="3.40.50.300">
    <property type="entry name" value="P-loop containing nucleotide triphosphate hydrolases"/>
    <property type="match status" value="1"/>
</dbReference>
<dbReference type="HAMAP" id="MF_00175">
    <property type="entry name" value="ClpX"/>
    <property type="match status" value="1"/>
</dbReference>
<dbReference type="InterPro" id="IPR003593">
    <property type="entry name" value="AAA+_ATPase"/>
</dbReference>
<dbReference type="InterPro" id="IPR050052">
    <property type="entry name" value="ATP-dep_Clp_protease_ClpX"/>
</dbReference>
<dbReference type="InterPro" id="IPR003959">
    <property type="entry name" value="ATPase_AAA_core"/>
</dbReference>
<dbReference type="InterPro" id="IPR019489">
    <property type="entry name" value="Clp_ATPase_C"/>
</dbReference>
<dbReference type="InterPro" id="IPR004487">
    <property type="entry name" value="Clp_protease_ATP-bd_su_ClpX"/>
</dbReference>
<dbReference type="InterPro" id="IPR046425">
    <property type="entry name" value="ClpX_bact"/>
</dbReference>
<dbReference type="InterPro" id="IPR027417">
    <property type="entry name" value="P-loop_NTPase"/>
</dbReference>
<dbReference type="InterPro" id="IPR010603">
    <property type="entry name" value="Znf_CppX_C4"/>
</dbReference>
<dbReference type="InterPro" id="IPR038366">
    <property type="entry name" value="Znf_CppX_C4_sf"/>
</dbReference>
<dbReference type="NCBIfam" id="TIGR00382">
    <property type="entry name" value="clpX"/>
    <property type="match status" value="1"/>
</dbReference>
<dbReference type="NCBIfam" id="NF003745">
    <property type="entry name" value="PRK05342.1"/>
    <property type="match status" value="1"/>
</dbReference>
<dbReference type="PANTHER" id="PTHR48102:SF7">
    <property type="entry name" value="ATP-DEPENDENT CLP PROTEASE ATP-BINDING SUBUNIT CLPX-LIKE, MITOCHONDRIAL"/>
    <property type="match status" value="1"/>
</dbReference>
<dbReference type="PANTHER" id="PTHR48102">
    <property type="entry name" value="ATP-DEPENDENT CLP PROTEASE ATP-BINDING SUBUNIT CLPX-LIKE, MITOCHONDRIAL-RELATED"/>
    <property type="match status" value="1"/>
</dbReference>
<dbReference type="Pfam" id="PF07724">
    <property type="entry name" value="AAA_2"/>
    <property type="match status" value="1"/>
</dbReference>
<dbReference type="Pfam" id="PF10431">
    <property type="entry name" value="ClpB_D2-small"/>
    <property type="match status" value="1"/>
</dbReference>
<dbReference type="Pfam" id="PF06689">
    <property type="entry name" value="zf-C4_ClpX"/>
    <property type="match status" value="1"/>
</dbReference>
<dbReference type="SMART" id="SM00382">
    <property type="entry name" value="AAA"/>
    <property type="match status" value="1"/>
</dbReference>
<dbReference type="SMART" id="SM01086">
    <property type="entry name" value="ClpB_D2-small"/>
    <property type="match status" value="1"/>
</dbReference>
<dbReference type="SMART" id="SM00994">
    <property type="entry name" value="zf-C4_ClpX"/>
    <property type="match status" value="1"/>
</dbReference>
<dbReference type="SUPFAM" id="SSF57716">
    <property type="entry name" value="Glucocorticoid receptor-like (DNA-binding domain)"/>
    <property type="match status" value="1"/>
</dbReference>
<dbReference type="SUPFAM" id="SSF52540">
    <property type="entry name" value="P-loop containing nucleoside triphosphate hydrolases"/>
    <property type="match status" value="1"/>
</dbReference>
<dbReference type="PROSITE" id="PS51902">
    <property type="entry name" value="CLPX_ZB"/>
    <property type="match status" value="1"/>
</dbReference>
<keyword id="KW-0067">ATP-binding</keyword>
<keyword id="KW-0143">Chaperone</keyword>
<keyword id="KW-0479">Metal-binding</keyword>
<keyword id="KW-0547">Nucleotide-binding</keyword>
<keyword id="KW-0862">Zinc</keyword>
<reference key="1">
    <citation type="journal article" date="2006" name="Genome Biol.">
        <title>The genome of Rhizobium leguminosarum has recognizable core and accessory components.</title>
        <authorList>
            <person name="Young J.P.W."/>
            <person name="Crossman L.C."/>
            <person name="Johnston A.W.B."/>
            <person name="Thomson N.R."/>
            <person name="Ghazoui Z.F."/>
            <person name="Hull K.H."/>
            <person name="Wexler M."/>
            <person name="Curson A.R.J."/>
            <person name="Todd J.D."/>
            <person name="Poole P.S."/>
            <person name="Mauchline T.H."/>
            <person name="East A.K."/>
            <person name="Quail M.A."/>
            <person name="Churcher C."/>
            <person name="Arrowsmith C."/>
            <person name="Cherevach I."/>
            <person name="Chillingworth T."/>
            <person name="Clarke K."/>
            <person name="Cronin A."/>
            <person name="Davis P."/>
            <person name="Fraser A."/>
            <person name="Hance Z."/>
            <person name="Hauser H."/>
            <person name="Jagels K."/>
            <person name="Moule S."/>
            <person name="Mungall K."/>
            <person name="Norbertczak H."/>
            <person name="Rabbinowitsch E."/>
            <person name="Sanders M."/>
            <person name="Simmonds M."/>
            <person name="Whitehead S."/>
            <person name="Parkhill J."/>
        </authorList>
    </citation>
    <scope>NUCLEOTIDE SEQUENCE [LARGE SCALE GENOMIC DNA]</scope>
    <source>
        <strain>DSM 114642 / LMG 32736 / 3841</strain>
    </source>
</reference>
<sequence>MSKVSGSNGGDSKNTLYCSFCGKSQHEVRKLIAGPTVFICDECVELCMDIIREENKSSMVKSRDGVPTPQDIIKVLDEYVIGQRQAKKILSVAVHNHYKRLAHASKNGEVELAKSNIMLVGPTGCGKTYLAQTLARIIDVPFTMADATTLTEAGYVGEDVENIILKLLQSADYNVERAQRGIVYIDEVDKISRKSDNPSITRDVSGEGVQQALLKIMEGTVASVPPQGGRKHPQQEFLQVDTTNILFICGGAFAGLDKIISARGEKTSIGFGASVKSQDDRRVGEVLRELEPEDLVKFGLIPEFIGRLPVLATLEDLDEDALIQILSEPKNALIKQYQRLFEMEDVELNFHEDALREIARKAIVRKTGARGLRSIMEKILLDTMFELPTLEGVREVVISEEVVRGSARPLYIYADRQEEKANASA</sequence>
<proteinExistence type="inferred from homology"/>
<comment type="function">
    <text evidence="1">ATP-dependent specificity component of the Clp protease. It directs the protease to specific substrates. Can perform chaperone functions in the absence of ClpP.</text>
</comment>
<comment type="subunit">
    <text evidence="1">Component of the ClpX-ClpP complex. Forms a hexameric ring that, in the presence of ATP, binds to fourteen ClpP subunits assembled into a disk-like structure with a central cavity, resembling the structure of eukaryotic proteasomes.</text>
</comment>
<comment type="similarity">
    <text evidence="1">Belongs to the ClpX chaperone family.</text>
</comment>
<name>CLPX_RHIJ3</name>
<gene>
    <name evidence="1" type="primary">clpX</name>
    <name type="ordered locus">RL1689</name>
</gene>
<feature type="chain" id="PRO_1000024631" description="ATP-dependent Clp protease ATP-binding subunit ClpX">
    <location>
        <begin position="1"/>
        <end position="425"/>
    </location>
</feature>
<feature type="domain" description="ClpX-type ZB" evidence="2">
    <location>
        <begin position="6"/>
        <end position="59"/>
    </location>
</feature>
<feature type="binding site" evidence="2">
    <location>
        <position position="18"/>
    </location>
    <ligand>
        <name>Zn(2+)</name>
        <dbReference type="ChEBI" id="CHEBI:29105"/>
    </ligand>
</feature>
<feature type="binding site" evidence="2">
    <location>
        <position position="21"/>
    </location>
    <ligand>
        <name>Zn(2+)</name>
        <dbReference type="ChEBI" id="CHEBI:29105"/>
    </ligand>
</feature>
<feature type="binding site" evidence="2">
    <location>
        <position position="40"/>
    </location>
    <ligand>
        <name>Zn(2+)</name>
        <dbReference type="ChEBI" id="CHEBI:29105"/>
    </ligand>
</feature>
<feature type="binding site" evidence="2">
    <location>
        <position position="43"/>
    </location>
    <ligand>
        <name>Zn(2+)</name>
        <dbReference type="ChEBI" id="CHEBI:29105"/>
    </ligand>
</feature>
<feature type="binding site" evidence="1">
    <location>
        <begin position="122"/>
        <end position="129"/>
    </location>
    <ligand>
        <name>ATP</name>
        <dbReference type="ChEBI" id="CHEBI:30616"/>
    </ligand>
</feature>